<comment type="function">
    <text evidence="1">Catalyzes the desaturation of acyl-CoAs to 2-trans-enoyl-CoAs.</text>
</comment>
<comment type="catalytic activity">
    <reaction>
        <text>a 2,3-saturated acyl-CoA + O2 = a (2E)-enoyl-CoA + H2O2</text>
        <dbReference type="Rhea" id="RHEA:38959"/>
        <dbReference type="ChEBI" id="CHEBI:15379"/>
        <dbReference type="ChEBI" id="CHEBI:16240"/>
        <dbReference type="ChEBI" id="CHEBI:58856"/>
        <dbReference type="ChEBI" id="CHEBI:65111"/>
        <dbReference type="EC" id="1.3.3.6"/>
    </reaction>
</comment>
<comment type="cofactor">
    <cofactor evidence="1">
        <name>FAD</name>
        <dbReference type="ChEBI" id="CHEBI:57692"/>
    </cofactor>
</comment>
<comment type="subcellular location">
    <subcellularLocation>
        <location evidence="4">Peroxisome</location>
    </subcellularLocation>
</comment>
<comment type="induction">
    <text evidence="3">Not induced by wounding.</text>
</comment>
<comment type="similarity">
    <text evidence="4">Belongs to the acyl-CoA oxidase family.</text>
</comment>
<gene>
    <name type="primary">ACX1.2</name>
    <name type="ordered locus">At2g35690</name>
    <name type="ORF">T20F21.12</name>
</gene>
<name>ACO12_ARATH</name>
<feature type="chain" id="PRO_0000204690" description="Putative peroxisomal acyl-coenzyme A oxidase 1.2">
    <location>
        <begin position="1"/>
        <end position="664"/>
    </location>
</feature>
<feature type="short sequence motif" description="Microbody targeting signal" evidence="2">
    <location>
        <begin position="662"/>
        <end position="664"/>
    </location>
</feature>
<feature type="binding site" evidence="1">
    <location>
        <begin position="399"/>
        <end position="404"/>
    </location>
    <ligand>
        <name>FAD</name>
        <dbReference type="ChEBI" id="CHEBI:57692"/>
    </ligand>
</feature>
<reference key="1">
    <citation type="journal article" date="1999" name="Nature">
        <title>Sequence and analysis of chromosome 2 of the plant Arabidopsis thaliana.</title>
        <authorList>
            <person name="Lin X."/>
            <person name="Kaul S."/>
            <person name="Rounsley S.D."/>
            <person name="Shea T.P."/>
            <person name="Benito M.-I."/>
            <person name="Town C.D."/>
            <person name="Fujii C.Y."/>
            <person name="Mason T.M."/>
            <person name="Bowman C.L."/>
            <person name="Barnstead M.E."/>
            <person name="Feldblyum T.V."/>
            <person name="Buell C.R."/>
            <person name="Ketchum K.A."/>
            <person name="Lee J.J."/>
            <person name="Ronning C.M."/>
            <person name="Koo H.L."/>
            <person name="Moffat K.S."/>
            <person name="Cronin L.A."/>
            <person name="Shen M."/>
            <person name="Pai G."/>
            <person name="Van Aken S."/>
            <person name="Umayam L."/>
            <person name="Tallon L.J."/>
            <person name="Gill J.E."/>
            <person name="Adams M.D."/>
            <person name="Carrera A.J."/>
            <person name="Creasy T.H."/>
            <person name="Goodman H.M."/>
            <person name="Somerville C.R."/>
            <person name="Copenhaver G.P."/>
            <person name="Preuss D."/>
            <person name="Nierman W.C."/>
            <person name="White O."/>
            <person name="Eisen J.A."/>
            <person name="Salzberg S.L."/>
            <person name="Fraser C.M."/>
            <person name="Venter J.C."/>
        </authorList>
    </citation>
    <scope>NUCLEOTIDE SEQUENCE [LARGE SCALE GENOMIC DNA]</scope>
    <source>
        <strain>cv. Columbia</strain>
    </source>
</reference>
<reference key="2">
    <citation type="journal article" date="2017" name="Plant J.">
        <title>Araport11: a complete reannotation of the Arabidopsis thaliana reference genome.</title>
        <authorList>
            <person name="Cheng C.Y."/>
            <person name="Krishnakumar V."/>
            <person name="Chan A.P."/>
            <person name="Thibaud-Nissen F."/>
            <person name="Schobel S."/>
            <person name="Town C.D."/>
        </authorList>
    </citation>
    <scope>GENOME REANNOTATION</scope>
    <source>
        <strain>cv. Columbia</strain>
    </source>
</reference>
<reference key="3">
    <citation type="journal article" date="2003" name="Science">
        <title>Empirical analysis of transcriptional activity in the Arabidopsis genome.</title>
        <authorList>
            <person name="Yamada K."/>
            <person name="Lim J."/>
            <person name="Dale J.M."/>
            <person name="Chen H."/>
            <person name="Shinn P."/>
            <person name="Palm C.J."/>
            <person name="Southwick A.M."/>
            <person name="Wu H.C."/>
            <person name="Kim C.J."/>
            <person name="Nguyen M."/>
            <person name="Pham P.K."/>
            <person name="Cheuk R.F."/>
            <person name="Karlin-Newmann G."/>
            <person name="Liu S.X."/>
            <person name="Lam B."/>
            <person name="Sakano H."/>
            <person name="Wu T."/>
            <person name="Yu G."/>
            <person name="Miranda M."/>
            <person name="Quach H.L."/>
            <person name="Tripp M."/>
            <person name="Chang C.H."/>
            <person name="Lee J.M."/>
            <person name="Toriumi M.J."/>
            <person name="Chan M.M."/>
            <person name="Tang C.C."/>
            <person name="Onodera C.S."/>
            <person name="Deng J.M."/>
            <person name="Akiyama K."/>
            <person name="Ansari Y."/>
            <person name="Arakawa T."/>
            <person name="Banh J."/>
            <person name="Banno F."/>
            <person name="Bowser L."/>
            <person name="Brooks S.Y."/>
            <person name="Carninci P."/>
            <person name="Chao Q."/>
            <person name="Choy N."/>
            <person name="Enju A."/>
            <person name="Goldsmith A.D."/>
            <person name="Gurjal M."/>
            <person name="Hansen N.F."/>
            <person name="Hayashizaki Y."/>
            <person name="Johnson-Hopson C."/>
            <person name="Hsuan V.W."/>
            <person name="Iida K."/>
            <person name="Karnes M."/>
            <person name="Khan S."/>
            <person name="Koesema E."/>
            <person name="Ishida J."/>
            <person name="Jiang P.X."/>
            <person name="Jones T."/>
            <person name="Kawai J."/>
            <person name="Kamiya A."/>
            <person name="Meyers C."/>
            <person name="Nakajima M."/>
            <person name="Narusaka M."/>
            <person name="Seki M."/>
            <person name="Sakurai T."/>
            <person name="Satou M."/>
            <person name="Tamse R."/>
            <person name="Vaysberg M."/>
            <person name="Wallender E.K."/>
            <person name="Wong C."/>
            <person name="Yamamura Y."/>
            <person name="Yuan S."/>
            <person name="Shinozaki K."/>
            <person name="Davis R.W."/>
            <person name="Theologis A."/>
            <person name="Ecker J.R."/>
        </authorList>
    </citation>
    <scope>NUCLEOTIDE SEQUENCE [LARGE SCALE MRNA]</scope>
    <source>
        <strain>cv. Columbia</strain>
    </source>
</reference>
<reference key="4">
    <citation type="journal article" date="2004" name="Plant Physiol.">
        <title>Gene-specific involvement of beta-oxidation in wound-activated responses in Arabidopsis.</title>
        <authorList>
            <person name="Cruz-Castillo M."/>
            <person name="Martinez C."/>
            <person name="Buchala A."/>
            <person name="Metraux J.-P."/>
            <person name="Leon J."/>
        </authorList>
    </citation>
    <scope>IDENTIFICATION</scope>
    <scope>INDUCTION</scope>
</reference>
<protein>
    <recommendedName>
        <fullName>Putative peroxisomal acyl-coenzyme A oxidase 1.2</fullName>
        <ecNumber>1.3.3.6</ecNumber>
    </recommendedName>
</protein>
<keyword id="KW-0274">FAD</keyword>
<keyword id="KW-0276">Fatty acid metabolism</keyword>
<keyword id="KW-0285">Flavoprotein</keyword>
<keyword id="KW-0443">Lipid metabolism</keyword>
<keyword id="KW-0560">Oxidoreductase</keyword>
<keyword id="KW-0576">Peroxisome</keyword>
<keyword id="KW-1185">Reference proteome</keyword>
<dbReference type="EC" id="1.3.3.6"/>
<dbReference type="EMBL" id="AC006068">
    <property type="protein sequence ID" value="AAD15446.1"/>
    <property type="molecule type" value="Genomic_DNA"/>
</dbReference>
<dbReference type="EMBL" id="CP002685">
    <property type="protein sequence ID" value="AEC09145.1"/>
    <property type="molecule type" value="Genomic_DNA"/>
</dbReference>
<dbReference type="EMBL" id="AY074357">
    <property type="protein sequence ID" value="AAL67053.1"/>
    <property type="molecule type" value="mRNA"/>
</dbReference>
<dbReference type="EMBL" id="AY096691">
    <property type="protein sequence ID" value="AAM20325.1"/>
    <property type="molecule type" value="mRNA"/>
</dbReference>
<dbReference type="PIR" id="G84771">
    <property type="entry name" value="G84771"/>
</dbReference>
<dbReference type="RefSeq" id="NP_181112.1">
    <property type="nucleotide sequence ID" value="NM_129124.4"/>
</dbReference>
<dbReference type="SMR" id="Q9ZQP2"/>
<dbReference type="BioGRID" id="3483">
    <property type="interactions" value="17"/>
</dbReference>
<dbReference type="FunCoup" id="Q9ZQP2">
    <property type="interactions" value="2235"/>
</dbReference>
<dbReference type="STRING" id="3702.Q9ZQP2"/>
<dbReference type="PaxDb" id="3702-AT2G35690.1"/>
<dbReference type="ProteomicsDB" id="244384"/>
<dbReference type="EnsemblPlants" id="AT2G35690.1">
    <property type="protein sequence ID" value="AT2G35690.1"/>
    <property type="gene ID" value="AT2G35690"/>
</dbReference>
<dbReference type="GeneID" id="818138"/>
<dbReference type="Gramene" id="AT2G35690.1">
    <property type="protein sequence ID" value="AT2G35690.1"/>
    <property type="gene ID" value="AT2G35690"/>
</dbReference>
<dbReference type="KEGG" id="ath:AT2G35690"/>
<dbReference type="Araport" id="AT2G35690"/>
<dbReference type="TAIR" id="AT2G35690">
    <property type="gene designation" value="ACX5"/>
</dbReference>
<dbReference type="eggNOG" id="KOG0136">
    <property type="taxonomic scope" value="Eukaryota"/>
</dbReference>
<dbReference type="HOGENOM" id="CLU_014629_3_1_1"/>
<dbReference type="InParanoid" id="Q9ZQP2"/>
<dbReference type="OMA" id="GINHEYM"/>
<dbReference type="PhylomeDB" id="Q9ZQP2"/>
<dbReference type="BRENDA" id="1.3.3.6">
    <property type="organism ID" value="399"/>
</dbReference>
<dbReference type="CD-CODE" id="4299E36E">
    <property type="entry name" value="Nucleolus"/>
</dbReference>
<dbReference type="PRO" id="PR:Q9ZQP2"/>
<dbReference type="Proteomes" id="UP000006548">
    <property type="component" value="Chromosome 2"/>
</dbReference>
<dbReference type="ExpressionAtlas" id="Q9ZQP2">
    <property type="expression patterns" value="baseline and differential"/>
</dbReference>
<dbReference type="GO" id="GO:0005783">
    <property type="term" value="C:endoplasmic reticulum"/>
    <property type="evidence" value="ECO:0007005"/>
    <property type="project" value="TAIR"/>
</dbReference>
<dbReference type="GO" id="GO:0005777">
    <property type="term" value="C:peroxisome"/>
    <property type="evidence" value="ECO:0007669"/>
    <property type="project" value="UniProtKB-SubCell"/>
</dbReference>
<dbReference type="GO" id="GO:0003997">
    <property type="term" value="F:acyl-CoA oxidase activity"/>
    <property type="evidence" value="ECO:0007669"/>
    <property type="project" value="UniProtKB-EC"/>
</dbReference>
<dbReference type="GO" id="GO:0071949">
    <property type="term" value="F:FAD binding"/>
    <property type="evidence" value="ECO:0007669"/>
    <property type="project" value="InterPro"/>
</dbReference>
<dbReference type="GO" id="GO:0006635">
    <property type="term" value="P:fatty acid beta-oxidation"/>
    <property type="evidence" value="ECO:0007669"/>
    <property type="project" value="InterPro"/>
</dbReference>
<dbReference type="FunFam" id="1.10.540.10:FF:000015">
    <property type="entry name" value="Acyl-coenzyme A oxidase"/>
    <property type="match status" value="1"/>
</dbReference>
<dbReference type="FunFam" id="1.20.140.10:FF:000005">
    <property type="entry name" value="Acyl-coenzyme A oxidase"/>
    <property type="match status" value="1"/>
</dbReference>
<dbReference type="FunFam" id="1.20.140.10:FF:000013">
    <property type="entry name" value="Acyl-coenzyme A oxidase"/>
    <property type="match status" value="1"/>
</dbReference>
<dbReference type="FunFam" id="2.40.110.10:FF:000075">
    <property type="entry name" value="Acyl-coenzyme A oxidase"/>
    <property type="match status" value="1"/>
</dbReference>
<dbReference type="Gene3D" id="1.10.540.10">
    <property type="entry name" value="Acyl-CoA dehydrogenase/oxidase, N-terminal domain"/>
    <property type="match status" value="1"/>
</dbReference>
<dbReference type="Gene3D" id="2.40.110.10">
    <property type="entry name" value="Butyryl-CoA Dehydrogenase, subunit A, domain 2"/>
    <property type="match status" value="1"/>
</dbReference>
<dbReference type="Gene3D" id="1.20.140.10">
    <property type="entry name" value="Butyryl-CoA Dehydrogenase, subunit A, domain 3"/>
    <property type="match status" value="2"/>
</dbReference>
<dbReference type="InterPro" id="IPR055060">
    <property type="entry name" value="ACOX_C_alpha1"/>
</dbReference>
<dbReference type="InterPro" id="IPR029320">
    <property type="entry name" value="Acyl-CoA_ox_N"/>
</dbReference>
<dbReference type="InterPro" id="IPR046373">
    <property type="entry name" value="Acyl-CoA_Oxase/DH_mid-dom_sf"/>
</dbReference>
<dbReference type="InterPro" id="IPR012258">
    <property type="entry name" value="Acyl-CoA_oxidase"/>
</dbReference>
<dbReference type="InterPro" id="IPR002655">
    <property type="entry name" value="Acyl-CoA_oxidase_C"/>
</dbReference>
<dbReference type="InterPro" id="IPR036250">
    <property type="entry name" value="AcylCo_DH-like_C"/>
</dbReference>
<dbReference type="InterPro" id="IPR037069">
    <property type="entry name" value="AcylCoA_DH/ox_N_sf"/>
</dbReference>
<dbReference type="InterPro" id="IPR009100">
    <property type="entry name" value="AcylCoA_DH/oxidase_NM_dom_sf"/>
</dbReference>
<dbReference type="PANTHER" id="PTHR10909">
    <property type="entry name" value="ELECTRON TRANSPORT OXIDOREDUCTASE"/>
    <property type="match status" value="1"/>
</dbReference>
<dbReference type="PANTHER" id="PTHR10909:SF376">
    <property type="entry name" value="PEROXISOMAL ACYL-COENZYME A OXIDASE 1.2-RELATED"/>
    <property type="match status" value="1"/>
</dbReference>
<dbReference type="Pfam" id="PF01756">
    <property type="entry name" value="ACOX"/>
    <property type="match status" value="1"/>
</dbReference>
<dbReference type="Pfam" id="PF22924">
    <property type="entry name" value="ACOX_C_alpha1"/>
    <property type="match status" value="1"/>
</dbReference>
<dbReference type="Pfam" id="PF14749">
    <property type="entry name" value="Acyl-CoA_ox_N"/>
    <property type="match status" value="1"/>
</dbReference>
<dbReference type="PIRSF" id="PIRSF000168">
    <property type="entry name" value="Acyl-CoA_oxidase"/>
    <property type="match status" value="1"/>
</dbReference>
<dbReference type="SUPFAM" id="SSF47203">
    <property type="entry name" value="Acyl-CoA dehydrogenase C-terminal domain-like"/>
    <property type="match status" value="2"/>
</dbReference>
<dbReference type="SUPFAM" id="SSF56645">
    <property type="entry name" value="Acyl-CoA dehydrogenase NM domain-like"/>
    <property type="match status" value="1"/>
</dbReference>
<evidence type="ECO:0000250" key="1"/>
<evidence type="ECO:0000255" key="2"/>
<evidence type="ECO:0000269" key="3">
    <source>
    </source>
</evidence>
<evidence type="ECO:0000305" key="4"/>
<organism>
    <name type="scientific">Arabidopsis thaliana</name>
    <name type="common">Mouse-ear cress</name>
    <dbReference type="NCBI Taxonomy" id="3702"/>
    <lineage>
        <taxon>Eukaryota</taxon>
        <taxon>Viridiplantae</taxon>
        <taxon>Streptophyta</taxon>
        <taxon>Embryophyta</taxon>
        <taxon>Tracheophyta</taxon>
        <taxon>Spermatophyta</taxon>
        <taxon>Magnoliopsida</taxon>
        <taxon>eudicotyledons</taxon>
        <taxon>Gunneridae</taxon>
        <taxon>Pentapetalae</taxon>
        <taxon>rosids</taxon>
        <taxon>malvids</taxon>
        <taxon>Brassicales</taxon>
        <taxon>Brassicaceae</taxon>
        <taxon>Camelineae</taxon>
        <taxon>Arabidopsis</taxon>
    </lineage>
</organism>
<accession>Q9ZQP2</accession>
<proteinExistence type="evidence at transcript level"/>
<sequence length="664" mass="74298">MERVDHLADERNKAEFNVDDMKIVWAGSRHAFDVSNRMSRLVANDPVFEKSKRAVMSRKELFKNTLRKSVHAWKLINELRLSDEEGLKLRSFMDQPGFLDLHWGMFVPAIKGQGTEQQQQKWLSLATKMQIIGCYAQTELGHGSNVQGLETTATFDPKTDQFIIHSPTQTSSKWWPGGLGKVSTHAVIYARLITNGKDHGVHGFIVQLRSLDDHSPLPGITVGDIGMKFGNGAYNSMDNGFLMFDHFRIPRDQMLMRLSKVTREGKYVASDVPRQLVYGTMVYVRQSIVSNASTALARAVCIATRYSAVRRQFGSHDGGIETQVINYKTQQNRLFPLLASAYAFRFVGEWLKWLYTDVTKRLEASDFATLPEAHACTAGLKSMTTSATSDGIEECRKLCGGHGYLWCSGLPELFAVYVPACTYEGDNVVLQLQVARFLMKTVSQLGSGKAPSGTTAYMGRAKHLLQCSSGVRNARDWLNPGMVLEAFEARALRMAVTCANNLSKFENQEQGFSELLADLVEAATAHCQLIVVSKFIAKVEGDIEGKGVKKQLKNLCYIYALYLLHKHLGDFLSTNSVTPEQASLANQQLRSLYSQVRPNAVALVDAFDYTDQYLGSVLGRYDGNVYPKLFEEALKDPLNDSVVPDGYREYIRPLIKQRFRSAKL</sequence>